<protein>
    <recommendedName>
        <fullName evidence="2">Putative hydrolase Bcen2424_5521</fullName>
        <ecNumber>3.-.-.-</ecNumber>
    </recommendedName>
</protein>
<evidence type="ECO:0000250" key="1">
    <source>
        <dbReference type="UniProtKB" id="Q6P587"/>
    </source>
</evidence>
<evidence type="ECO:0000305" key="2"/>
<feature type="chain" id="PRO_0000371510" description="Putative hydrolase Bcen2424_5521">
    <location>
        <begin position="1"/>
        <end position="282"/>
    </location>
</feature>
<feature type="binding site" evidence="1">
    <location>
        <position position="124"/>
    </location>
    <ligand>
        <name>Mg(2+)</name>
        <dbReference type="ChEBI" id="CHEBI:18420"/>
    </ligand>
</feature>
<feature type="binding site" evidence="1">
    <location>
        <position position="126"/>
    </location>
    <ligand>
        <name>Mg(2+)</name>
        <dbReference type="ChEBI" id="CHEBI:18420"/>
    </ligand>
</feature>
<feature type="binding site" evidence="1">
    <location>
        <position position="155"/>
    </location>
    <ligand>
        <name>Mg(2+)</name>
        <dbReference type="ChEBI" id="CHEBI:18420"/>
    </ligand>
</feature>
<name>UGL_BURCH</name>
<keyword id="KW-0378">Hydrolase</keyword>
<keyword id="KW-0460">Magnesium</keyword>
<keyword id="KW-0479">Metal-binding</keyword>
<dbReference type="EC" id="3.-.-.-"/>
<dbReference type="EMBL" id="CP000459">
    <property type="protein sequence ID" value="ABK12254.1"/>
    <property type="molecule type" value="Genomic_DNA"/>
</dbReference>
<dbReference type="RefSeq" id="WP_011548908.1">
    <property type="nucleotide sequence ID" value="NC_008543.1"/>
</dbReference>
<dbReference type="SMR" id="A0B3M8"/>
<dbReference type="KEGG" id="bch:Bcen2424_5521"/>
<dbReference type="HOGENOM" id="CLU_028458_3_4_4"/>
<dbReference type="GO" id="GO:0016787">
    <property type="term" value="F:hydrolase activity"/>
    <property type="evidence" value="ECO:0007669"/>
    <property type="project" value="UniProtKB-KW"/>
</dbReference>
<dbReference type="GO" id="GO:0046872">
    <property type="term" value="F:metal ion binding"/>
    <property type="evidence" value="ECO:0007669"/>
    <property type="project" value="UniProtKB-KW"/>
</dbReference>
<dbReference type="GO" id="GO:0050385">
    <property type="term" value="F:ureidoglycolate lyase activity"/>
    <property type="evidence" value="ECO:0007669"/>
    <property type="project" value="UniProtKB-EC"/>
</dbReference>
<dbReference type="GO" id="GO:0019628">
    <property type="term" value="P:urate catabolic process"/>
    <property type="evidence" value="ECO:0007669"/>
    <property type="project" value="UniProtKB-UniPathway"/>
</dbReference>
<dbReference type="FunFam" id="3.90.850.10:FF:000002">
    <property type="entry name" value="2-hydroxyhepta-2,4-diene-1,7-dioate isomerase"/>
    <property type="match status" value="1"/>
</dbReference>
<dbReference type="Gene3D" id="3.90.850.10">
    <property type="entry name" value="Fumarylacetoacetase-like, C-terminal domain"/>
    <property type="match status" value="1"/>
</dbReference>
<dbReference type="InterPro" id="IPR051121">
    <property type="entry name" value="FAH"/>
</dbReference>
<dbReference type="InterPro" id="IPR011234">
    <property type="entry name" value="Fumarylacetoacetase-like_C"/>
</dbReference>
<dbReference type="InterPro" id="IPR036663">
    <property type="entry name" value="Fumarylacetoacetase_C_sf"/>
</dbReference>
<dbReference type="PANTHER" id="PTHR42796:SF4">
    <property type="entry name" value="FUMARYLACETOACETATE HYDROLASE DOMAIN-CONTAINING PROTEIN 2A"/>
    <property type="match status" value="1"/>
</dbReference>
<dbReference type="PANTHER" id="PTHR42796">
    <property type="entry name" value="FUMARYLACETOACETATE HYDROLASE DOMAIN-CONTAINING PROTEIN 2A-RELATED"/>
    <property type="match status" value="1"/>
</dbReference>
<dbReference type="Pfam" id="PF01557">
    <property type="entry name" value="FAA_hydrolase"/>
    <property type="match status" value="1"/>
</dbReference>
<dbReference type="SUPFAM" id="SSF56529">
    <property type="entry name" value="FAH"/>
    <property type="match status" value="1"/>
</dbReference>
<reference key="1">
    <citation type="submission" date="2006-08" db="EMBL/GenBank/DDBJ databases">
        <title>Complete sequence of chromosome 2 of Burkholderia cenocepacia HI2424.</title>
        <authorList>
            <person name="Copeland A."/>
            <person name="Lucas S."/>
            <person name="Lapidus A."/>
            <person name="Barry K."/>
            <person name="Detter J.C."/>
            <person name="Glavina del Rio T."/>
            <person name="Hammon N."/>
            <person name="Israni S."/>
            <person name="Pitluck S."/>
            <person name="Chain P."/>
            <person name="Malfatti S."/>
            <person name="Shin M."/>
            <person name="Vergez L."/>
            <person name="Schmutz J."/>
            <person name="Larimer F."/>
            <person name="Land M."/>
            <person name="Hauser L."/>
            <person name="Kyrpides N."/>
            <person name="Kim E."/>
            <person name="LiPuma J.J."/>
            <person name="Gonzalez C.F."/>
            <person name="Konstantinidis K."/>
            <person name="Tiedje J.M."/>
            <person name="Richardson P."/>
        </authorList>
    </citation>
    <scope>NUCLEOTIDE SEQUENCE [LARGE SCALE GENOMIC DNA]</scope>
    <source>
        <strain>HI2424</strain>
    </source>
</reference>
<organism>
    <name type="scientific">Burkholderia cenocepacia (strain HI2424)</name>
    <dbReference type="NCBI Taxonomy" id="331272"/>
    <lineage>
        <taxon>Bacteria</taxon>
        <taxon>Pseudomonadati</taxon>
        <taxon>Pseudomonadota</taxon>
        <taxon>Betaproteobacteria</taxon>
        <taxon>Burkholderiales</taxon>
        <taxon>Burkholderiaceae</taxon>
        <taxon>Burkholderia</taxon>
        <taxon>Burkholderia cepacia complex</taxon>
    </lineage>
</organism>
<comment type="cofactor">
    <cofactor evidence="1">
        <name>Mg(2+)</name>
        <dbReference type="ChEBI" id="CHEBI:18420"/>
    </cofactor>
</comment>
<comment type="similarity">
    <text evidence="2">Belongs to the FAH family.</text>
</comment>
<accession>A0B3M8</accession>
<proteinExistence type="inferred from homology"/>
<sequence>MKLLRYGPSGQEKPGILDAAGRIRDLSAHVPDLAGDVLSDAGLARLRAIDPATLPLVSGEPRIGACVGHVGKFIGIGLNYADHAAEAGMPVPKEPVVFGKWTSSICGPNDGIDIPKGSVKTDWEVELGVVIGAKCKDVDEARALDYVAGYCVVNDVSEREWQIERGGQWDKGKGFDTFGPIGPWLVTRDEVPDPQRLDLWLEIDGHRYQNGNTRTMVFTVAQLVAYLSTCMTLQPGDVITTGTPPGVGMGVKPSPVFLKAGQTVRLGIEGLGEQLQRTRDAQ</sequence>
<gene>
    <name type="ordered locus">Bcen2424_5521</name>
</gene>